<evidence type="ECO:0000255" key="1">
    <source>
        <dbReference type="HAMAP-Rule" id="MF_01326"/>
    </source>
</evidence>
<evidence type="ECO:0000305" key="2"/>
<comment type="function">
    <text evidence="1">One of two assembly initiator proteins, it binds directly to the 5'-end of the 23S rRNA, where it nucleates assembly of the 50S subunit.</text>
</comment>
<comment type="function">
    <text evidence="1">One of the proteins that surrounds the polypeptide exit tunnel on the outside of the subunit.</text>
</comment>
<comment type="subunit">
    <text evidence="1">Part of the 50S ribosomal subunit.</text>
</comment>
<comment type="similarity">
    <text evidence="1">Belongs to the universal ribosomal protein uL24 family.</text>
</comment>
<dbReference type="EMBL" id="AE004439">
    <property type="protein sequence ID" value="AAK03488.1"/>
    <property type="molecule type" value="Genomic_DNA"/>
</dbReference>
<dbReference type="RefSeq" id="WP_005717922.1">
    <property type="nucleotide sequence ID" value="NC_002663.1"/>
</dbReference>
<dbReference type="SMR" id="Q9CL41"/>
<dbReference type="STRING" id="272843.PM1404"/>
<dbReference type="EnsemblBacteria" id="AAK03488">
    <property type="protein sequence ID" value="AAK03488"/>
    <property type="gene ID" value="PM1404"/>
</dbReference>
<dbReference type="GeneID" id="77207037"/>
<dbReference type="KEGG" id="pmu:PM1404"/>
<dbReference type="HOGENOM" id="CLU_093315_2_2_6"/>
<dbReference type="OrthoDB" id="9807419at2"/>
<dbReference type="Proteomes" id="UP000000809">
    <property type="component" value="Chromosome"/>
</dbReference>
<dbReference type="GO" id="GO:1990904">
    <property type="term" value="C:ribonucleoprotein complex"/>
    <property type="evidence" value="ECO:0007669"/>
    <property type="project" value="UniProtKB-KW"/>
</dbReference>
<dbReference type="GO" id="GO:0005840">
    <property type="term" value="C:ribosome"/>
    <property type="evidence" value="ECO:0007669"/>
    <property type="project" value="UniProtKB-KW"/>
</dbReference>
<dbReference type="GO" id="GO:0019843">
    <property type="term" value="F:rRNA binding"/>
    <property type="evidence" value="ECO:0007669"/>
    <property type="project" value="UniProtKB-UniRule"/>
</dbReference>
<dbReference type="GO" id="GO:0003735">
    <property type="term" value="F:structural constituent of ribosome"/>
    <property type="evidence" value="ECO:0007669"/>
    <property type="project" value="InterPro"/>
</dbReference>
<dbReference type="GO" id="GO:0006412">
    <property type="term" value="P:translation"/>
    <property type="evidence" value="ECO:0007669"/>
    <property type="project" value="UniProtKB-UniRule"/>
</dbReference>
<dbReference type="CDD" id="cd06089">
    <property type="entry name" value="KOW_RPL26"/>
    <property type="match status" value="1"/>
</dbReference>
<dbReference type="FunFam" id="2.30.30.30:FF:000004">
    <property type="entry name" value="50S ribosomal protein L24"/>
    <property type="match status" value="1"/>
</dbReference>
<dbReference type="Gene3D" id="2.30.30.30">
    <property type="match status" value="1"/>
</dbReference>
<dbReference type="HAMAP" id="MF_01326_B">
    <property type="entry name" value="Ribosomal_uL24_B"/>
    <property type="match status" value="1"/>
</dbReference>
<dbReference type="InterPro" id="IPR005824">
    <property type="entry name" value="KOW"/>
</dbReference>
<dbReference type="InterPro" id="IPR014722">
    <property type="entry name" value="Rib_uL2_dom2"/>
</dbReference>
<dbReference type="InterPro" id="IPR003256">
    <property type="entry name" value="Ribosomal_uL24"/>
</dbReference>
<dbReference type="InterPro" id="IPR005825">
    <property type="entry name" value="Ribosomal_uL24_CS"/>
</dbReference>
<dbReference type="InterPro" id="IPR041988">
    <property type="entry name" value="Ribosomal_uL24_KOW"/>
</dbReference>
<dbReference type="InterPro" id="IPR008991">
    <property type="entry name" value="Translation_prot_SH3-like_sf"/>
</dbReference>
<dbReference type="NCBIfam" id="TIGR01079">
    <property type="entry name" value="rplX_bact"/>
    <property type="match status" value="1"/>
</dbReference>
<dbReference type="PANTHER" id="PTHR12903">
    <property type="entry name" value="MITOCHONDRIAL RIBOSOMAL PROTEIN L24"/>
    <property type="match status" value="1"/>
</dbReference>
<dbReference type="Pfam" id="PF00467">
    <property type="entry name" value="KOW"/>
    <property type="match status" value="1"/>
</dbReference>
<dbReference type="Pfam" id="PF17136">
    <property type="entry name" value="ribosomal_L24"/>
    <property type="match status" value="1"/>
</dbReference>
<dbReference type="SMART" id="SM00739">
    <property type="entry name" value="KOW"/>
    <property type="match status" value="1"/>
</dbReference>
<dbReference type="SUPFAM" id="SSF50104">
    <property type="entry name" value="Translation proteins SH3-like domain"/>
    <property type="match status" value="1"/>
</dbReference>
<dbReference type="PROSITE" id="PS01108">
    <property type="entry name" value="RIBOSOMAL_L24"/>
    <property type="match status" value="1"/>
</dbReference>
<accession>Q9CL41</accession>
<protein>
    <recommendedName>
        <fullName evidence="1">Large ribosomal subunit protein uL24</fullName>
    </recommendedName>
    <alternativeName>
        <fullName evidence="2">50S ribosomal protein L24</fullName>
    </alternativeName>
</protein>
<organism>
    <name type="scientific">Pasteurella multocida (strain Pm70)</name>
    <dbReference type="NCBI Taxonomy" id="272843"/>
    <lineage>
        <taxon>Bacteria</taxon>
        <taxon>Pseudomonadati</taxon>
        <taxon>Pseudomonadota</taxon>
        <taxon>Gammaproteobacteria</taxon>
        <taxon>Pasteurellales</taxon>
        <taxon>Pasteurellaceae</taxon>
        <taxon>Pasteurella</taxon>
    </lineage>
</organism>
<proteinExistence type="inferred from homology"/>
<feature type="chain" id="PRO_0000130690" description="Large ribosomal subunit protein uL24">
    <location>
        <begin position="1"/>
        <end position="103"/>
    </location>
</feature>
<keyword id="KW-1185">Reference proteome</keyword>
<keyword id="KW-0687">Ribonucleoprotein</keyword>
<keyword id="KW-0689">Ribosomal protein</keyword>
<keyword id="KW-0694">RNA-binding</keyword>
<keyword id="KW-0699">rRNA-binding</keyword>
<reference key="1">
    <citation type="journal article" date="2001" name="Proc. Natl. Acad. Sci. U.S.A.">
        <title>Complete genomic sequence of Pasteurella multocida Pm70.</title>
        <authorList>
            <person name="May B.J."/>
            <person name="Zhang Q."/>
            <person name="Li L.L."/>
            <person name="Paustian M.L."/>
            <person name="Whittam T.S."/>
            <person name="Kapur V."/>
        </authorList>
    </citation>
    <scope>NUCLEOTIDE SEQUENCE [LARGE SCALE GENOMIC DNA]</scope>
    <source>
        <strain>Pm70</strain>
    </source>
</reference>
<sequence>MAAKIRQNDEVIVLAGKSKGKRGKVTQVLPNGKVIVEGVNIITKHEKPVPALGKEGGLVKKEAAIDVSNVAIFNPKTNKADRVGFRFEDGKKVRFFKSNNEII</sequence>
<name>RL24_PASMU</name>
<gene>
    <name evidence="1" type="primary">rplX</name>
    <name evidence="1" type="synonym">rpl24</name>
    <name type="ordered locus">PM1404</name>
</gene>